<name>RS7_CAMJJ</name>
<dbReference type="EMBL" id="CP000538">
    <property type="protein sequence ID" value="EAQ73024.1"/>
    <property type="molecule type" value="Genomic_DNA"/>
</dbReference>
<dbReference type="RefSeq" id="WP_002779471.1">
    <property type="nucleotide sequence ID" value="NC_008787.1"/>
</dbReference>
<dbReference type="SMR" id="A1VYJ7"/>
<dbReference type="KEGG" id="cjj:CJJ81176_0512"/>
<dbReference type="eggNOG" id="COG0049">
    <property type="taxonomic scope" value="Bacteria"/>
</dbReference>
<dbReference type="HOGENOM" id="CLU_072226_1_1_7"/>
<dbReference type="Proteomes" id="UP000000646">
    <property type="component" value="Chromosome"/>
</dbReference>
<dbReference type="GO" id="GO:0015935">
    <property type="term" value="C:small ribosomal subunit"/>
    <property type="evidence" value="ECO:0007669"/>
    <property type="project" value="InterPro"/>
</dbReference>
<dbReference type="GO" id="GO:0019843">
    <property type="term" value="F:rRNA binding"/>
    <property type="evidence" value="ECO:0007669"/>
    <property type="project" value="UniProtKB-UniRule"/>
</dbReference>
<dbReference type="GO" id="GO:0003735">
    <property type="term" value="F:structural constituent of ribosome"/>
    <property type="evidence" value="ECO:0007669"/>
    <property type="project" value="InterPro"/>
</dbReference>
<dbReference type="GO" id="GO:0000049">
    <property type="term" value="F:tRNA binding"/>
    <property type="evidence" value="ECO:0007669"/>
    <property type="project" value="UniProtKB-UniRule"/>
</dbReference>
<dbReference type="GO" id="GO:0006412">
    <property type="term" value="P:translation"/>
    <property type="evidence" value="ECO:0007669"/>
    <property type="project" value="UniProtKB-UniRule"/>
</dbReference>
<dbReference type="CDD" id="cd14869">
    <property type="entry name" value="uS7_Bacteria"/>
    <property type="match status" value="1"/>
</dbReference>
<dbReference type="FunFam" id="1.10.455.10:FF:000001">
    <property type="entry name" value="30S ribosomal protein S7"/>
    <property type="match status" value="1"/>
</dbReference>
<dbReference type="Gene3D" id="1.10.455.10">
    <property type="entry name" value="Ribosomal protein S7 domain"/>
    <property type="match status" value="1"/>
</dbReference>
<dbReference type="HAMAP" id="MF_00480_B">
    <property type="entry name" value="Ribosomal_uS7_B"/>
    <property type="match status" value="1"/>
</dbReference>
<dbReference type="InterPro" id="IPR000235">
    <property type="entry name" value="Ribosomal_uS7"/>
</dbReference>
<dbReference type="InterPro" id="IPR005717">
    <property type="entry name" value="Ribosomal_uS7_bac/org-type"/>
</dbReference>
<dbReference type="InterPro" id="IPR020606">
    <property type="entry name" value="Ribosomal_uS7_CS"/>
</dbReference>
<dbReference type="InterPro" id="IPR023798">
    <property type="entry name" value="Ribosomal_uS7_dom"/>
</dbReference>
<dbReference type="InterPro" id="IPR036823">
    <property type="entry name" value="Ribosomal_uS7_dom_sf"/>
</dbReference>
<dbReference type="NCBIfam" id="TIGR01029">
    <property type="entry name" value="rpsG_bact"/>
    <property type="match status" value="1"/>
</dbReference>
<dbReference type="PANTHER" id="PTHR11205">
    <property type="entry name" value="RIBOSOMAL PROTEIN S7"/>
    <property type="match status" value="1"/>
</dbReference>
<dbReference type="Pfam" id="PF00177">
    <property type="entry name" value="Ribosomal_S7"/>
    <property type="match status" value="1"/>
</dbReference>
<dbReference type="PIRSF" id="PIRSF002122">
    <property type="entry name" value="RPS7p_RPS7a_RPS5e_RPS7o"/>
    <property type="match status" value="1"/>
</dbReference>
<dbReference type="SUPFAM" id="SSF47973">
    <property type="entry name" value="Ribosomal protein S7"/>
    <property type="match status" value="1"/>
</dbReference>
<dbReference type="PROSITE" id="PS00052">
    <property type="entry name" value="RIBOSOMAL_S7"/>
    <property type="match status" value="1"/>
</dbReference>
<comment type="function">
    <text evidence="1">One of the primary rRNA binding proteins, it binds directly to 16S rRNA where it nucleates assembly of the head domain of the 30S subunit. Is located at the subunit interface close to the decoding center, probably blocks exit of the E-site tRNA.</text>
</comment>
<comment type="subunit">
    <text evidence="1">Part of the 30S ribosomal subunit. Contacts proteins S9 and S11.</text>
</comment>
<comment type="similarity">
    <text evidence="1">Belongs to the universal ribosomal protein uS7 family.</text>
</comment>
<evidence type="ECO:0000255" key="1">
    <source>
        <dbReference type="HAMAP-Rule" id="MF_00480"/>
    </source>
</evidence>
<evidence type="ECO:0000305" key="2"/>
<protein>
    <recommendedName>
        <fullName evidence="1">Small ribosomal subunit protein uS7</fullName>
    </recommendedName>
    <alternativeName>
        <fullName evidence="2">30S ribosomal protein S7</fullName>
    </alternativeName>
</protein>
<organism>
    <name type="scientific">Campylobacter jejuni subsp. jejuni serotype O:23/36 (strain 81-176)</name>
    <dbReference type="NCBI Taxonomy" id="354242"/>
    <lineage>
        <taxon>Bacteria</taxon>
        <taxon>Pseudomonadati</taxon>
        <taxon>Campylobacterota</taxon>
        <taxon>Epsilonproteobacteria</taxon>
        <taxon>Campylobacterales</taxon>
        <taxon>Campylobacteraceae</taxon>
        <taxon>Campylobacter</taxon>
    </lineage>
</organism>
<feature type="chain" id="PRO_1000014170" description="Small ribosomal subunit protein uS7">
    <location>
        <begin position="1"/>
        <end position="156"/>
    </location>
</feature>
<keyword id="KW-0687">Ribonucleoprotein</keyword>
<keyword id="KW-0689">Ribosomal protein</keyword>
<keyword id="KW-0694">RNA-binding</keyword>
<keyword id="KW-0699">rRNA-binding</keyword>
<keyword id="KW-0820">tRNA-binding</keyword>
<gene>
    <name evidence="1" type="primary">rpsG</name>
    <name type="ordered locus">CJJ81176_0512</name>
</gene>
<reference key="1">
    <citation type="submission" date="2006-12" db="EMBL/GenBank/DDBJ databases">
        <authorList>
            <person name="Fouts D.E."/>
            <person name="Nelson K.E."/>
            <person name="Sebastian Y."/>
        </authorList>
    </citation>
    <scope>NUCLEOTIDE SEQUENCE [LARGE SCALE GENOMIC DNA]</scope>
    <source>
        <strain>81-176</strain>
    </source>
</reference>
<proteinExistence type="inferred from homology"/>
<sequence length="156" mass="17692">MRRRKAPVREVLPDPIYGNKVITKFINSLMYDGKKSTATTIMYGALEAIDKKGGEKKGIDIFNDAIENIKPLLEVKSRRVGGATYQVPVEVRPARQQALAIRWIISFARKRSERTMIDKLAAELLDAANSKGASFKKKEDTYKMAEANKAFAHYRW</sequence>
<accession>A1VYJ7</accession>